<keyword id="KW-0238">DNA-binding</keyword>
<keyword id="KW-0804">Transcription</keyword>
<keyword id="KW-0805">Transcription regulation</keyword>
<protein>
    <recommendedName>
        <fullName evidence="1">Putative HTH-type transcriptional regulatory protein M1425_1284</fullName>
    </recommendedName>
</protein>
<organism>
    <name type="scientific">Saccharolobus islandicus (strain M.14.25 / Kamchatka #1)</name>
    <name type="common">Sulfolobus islandicus</name>
    <dbReference type="NCBI Taxonomy" id="427317"/>
    <lineage>
        <taxon>Archaea</taxon>
        <taxon>Thermoproteota</taxon>
        <taxon>Thermoprotei</taxon>
        <taxon>Sulfolobales</taxon>
        <taxon>Sulfolobaceae</taxon>
        <taxon>Saccharolobus</taxon>
    </lineage>
</organism>
<reference key="1">
    <citation type="journal article" date="2009" name="Proc. Natl. Acad. Sci. U.S.A.">
        <title>Biogeography of the Sulfolobus islandicus pan-genome.</title>
        <authorList>
            <person name="Reno M.L."/>
            <person name="Held N.L."/>
            <person name="Fields C.J."/>
            <person name="Burke P.V."/>
            <person name="Whitaker R.J."/>
        </authorList>
    </citation>
    <scope>NUCLEOTIDE SEQUENCE [LARGE SCALE GENOMIC DNA]</scope>
    <source>
        <strain>M.14.25 / Kamchatka #1</strain>
    </source>
</reference>
<sequence length="310" mass="35558">MSKKIINEVIDILEDKKYTYTMIEYPEHNRKSVDIVLNSKEPTLIRVSEDKVTKEEISDLKKIAVSTLTASLVVTNEEEEDIVSVKADNVFAVSPEGFKKVINGEKIFLYRTRGGIFIKIRNYILKHKREEMGYSIGDVAKFLGVSRKAIYDYEKGDSDVSLEVAEKLIDLFGDDIIGDVIWDSIKGKKEVIEEDITEFSPESFKSKLIYKLKENGLNILSLKLTAADLIVKDNENNRYLVTIENKDYNKSMKKFYEAKKLASYTKSELLIIIRTSKMLKECEDLGYKTYEENDIHSLIDEIKGSNGRQS</sequence>
<feature type="chain" id="PRO_1000212145" description="Putative HTH-type transcriptional regulatory protein M1425_1284">
    <location>
        <begin position="1"/>
        <end position="310"/>
    </location>
</feature>
<feature type="domain" description="HTH cro/C1-type" evidence="1">
    <location>
        <begin position="125"/>
        <end position="180"/>
    </location>
</feature>
<feature type="DNA-binding region" description="H-T-H motif" evidence="1">
    <location>
        <begin position="136"/>
        <end position="155"/>
    </location>
</feature>
<name>Y1284_SACI4</name>
<accession>C3MYR0</accession>
<evidence type="ECO:0000255" key="1">
    <source>
        <dbReference type="HAMAP-Rule" id="MF_00584"/>
    </source>
</evidence>
<proteinExistence type="inferred from homology"/>
<gene>
    <name type="ordered locus">M1425_1284</name>
</gene>
<dbReference type="EMBL" id="CP001400">
    <property type="protein sequence ID" value="ACP38039.1"/>
    <property type="molecule type" value="Genomic_DNA"/>
</dbReference>
<dbReference type="RefSeq" id="WP_012711291.1">
    <property type="nucleotide sequence ID" value="NC_012588.1"/>
</dbReference>
<dbReference type="SMR" id="C3MYR0"/>
<dbReference type="KEGG" id="sia:M1425_1284"/>
<dbReference type="HOGENOM" id="CLU_075726_1_0_2"/>
<dbReference type="Proteomes" id="UP000001350">
    <property type="component" value="Chromosome"/>
</dbReference>
<dbReference type="GO" id="GO:0003677">
    <property type="term" value="F:DNA binding"/>
    <property type="evidence" value="ECO:0007669"/>
    <property type="project" value="UniProtKB-KW"/>
</dbReference>
<dbReference type="GO" id="GO:0003700">
    <property type="term" value="F:DNA-binding transcription factor activity"/>
    <property type="evidence" value="ECO:0007669"/>
    <property type="project" value="UniProtKB-UniRule"/>
</dbReference>
<dbReference type="CDD" id="cd00093">
    <property type="entry name" value="HTH_XRE"/>
    <property type="match status" value="1"/>
</dbReference>
<dbReference type="Gene3D" id="1.10.260.40">
    <property type="entry name" value="lambda repressor-like DNA-binding domains"/>
    <property type="match status" value="1"/>
</dbReference>
<dbReference type="HAMAP" id="MF_00584">
    <property type="entry name" value="HTH_type_cro_C1"/>
    <property type="match status" value="1"/>
</dbReference>
<dbReference type="InterPro" id="IPR020886">
    <property type="entry name" value="Arc_TR_HTH"/>
</dbReference>
<dbReference type="InterPro" id="IPR001387">
    <property type="entry name" value="Cro/C1-type_HTH"/>
</dbReference>
<dbReference type="InterPro" id="IPR010982">
    <property type="entry name" value="Lambda_DNA-bd_dom_sf"/>
</dbReference>
<dbReference type="Pfam" id="PF01381">
    <property type="entry name" value="HTH_3"/>
    <property type="match status" value="1"/>
</dbReference>
<dbReference type="SMART" id="SM00530">
    <property type="entry name" value="HTH_XRE"/>
    <property type="match status" value="1"/>
</dbReference>
<dbReference type="SUPFAM" id="SSF47413">
    <property type="entry name" value="lambda repressor-like DNA-binding domains"/>
    <property type="match status" value="1"/>
</dbReference>
<dbReference type="PROSITE" id="PS50943">
    <property type="entry name" value="HTH_CROC1"/>
    <property type="match status" value="1"/>
</dbReference>